<evidence type="ECO:0000255" key="1">
    <source>
        <dbReference type="HAMAP-Rule" id="MF_00289"/>
    </source>
</evidence>
<feature type="chain" id="PRO_0000397142" description="Proteasome subunit alpha">
    <location>
        <begin position="1"/>
        <end position="236"/>
    </location>
</feature>
<dbReference type="EMBL" id="CP001706">
    <property type="protein sequence ID" value="ACV08861.1"/>
    <property type="molecule type" value="Genomic_DNA"/>
</dbReference>
<dbReference type="RefSeq" id="WP_015771489.1">
    <property type="nucleotide sequence ID" value="NC_013174.1"/>
</dbReference>
<dbReference type="SMR" id="C7R404"/>
<dbReference type="STRING" id="471856.Jden_1205"/>
<dbReference type="KEGG" id="jde:Jden_1205"/>
<dbReference type="eggNOG" id="COG0638">
    <property type="taxonomic scope" value="Bacteria"/>
</dbReference>
<dbReference type="HOGENOM" id="CLU_071031_0_0_11"/>
<dbReference type="OrthoDB" id="9775643at2"/>
<dbReference type="UniPathway" id="UPA00997"/>
<dbReference type="Proteomes" id="UP000000628">
    <property type="component" value="Chromosome"/>
</dbReference>
<dbReference type="GO" id="GO:0005737">
    <property type="term" value="C:cytoplasm"/>
    <property type="evidence" value="ECO:0007669"/>
    <property type="project" value="UniProtKB-SubCell"/>
</dbReference>
<dbReference type="GO" id="GO:0019773">
    <property type="term" value="C:proteasome core complex, alpha-subunit complex"/>
    <property type="evidence" value="ECO:0007669"/>
    <property type="project" value="UniProtKB-UniRule"/>
</dbReference>
<dbReference type="GO" id="GO:0004298">
    <property type="term" value="F:threonine-type endopeptidase activity"/>
    <property type="evidence" value="ECO:0007669"/>
    <property type="project" value="InterPro"/>
</dbReference>
<dbReference type="GO" id="GO:0019941">
    <property type="term" value="P:modification-dependent protein catabolic process"/>
    <property type="evidence" value="ECO:0007669"/>
    <property type="project" value="UniProtKB-UniRule"/>
</dbReference>
<dbReference type="GO" id="GO:0010498">
    <property type="term" value="P:proteasomal protein catabolic process"/>
    <property type="evidence" value="ECO:0007669"/>
    <property type="project" value="UniProtKB-UniRule"/>
</dbReference>
<dbReference type="CDD" id="cd01906">
    <property type="entry name" value="proteasome_protease_HslV"/>
    <property type="match status" value="1"/>
</dbReference>
<dbReference type="Gene3D" id="3.60.20.10">
    <property type="entry name" value="Glutamine Phosphoribosylpyrophosphate, subunit 1, domain 1"/>
    <property type="match status" value="1"/>
</dbReference>
<dbReference type="HAMAP" id="MF_00289_B">
    <property type="entry name" value="Proteasome_A_B"/>
    <property type="match status" value="1"/>
</dbReference>
<dbReference type="InterPro" id="IPR029055">
    <property type="entry name" value="Ntn_hydrolases_N"/>
</dbReference>
<dbReference type="InterPro" id="IPR023332">
    <property type="entry name" value="Proteasome_alpha-type"/>
</dbReference>
<dbReference type="InterPro" id="IPR022296">
    <property type="entry name" value="Proteasome_asu_bac"/>
</dbReference>
<dbReference type="InterPro" id="IPR001353">
    <property type="entry name" value="Proteasome_sua/b"/>
</dbReference>
<dbReference type="NCBIfam" id="TIGR03691">
    <property type="entry name" value="20S_bact_alpha"/>
    <property type="match status" value="1"/>
</dbReference>
<dbReference type="Pfam" id="PF00227">
    <property type="entry name" value="Proteasome"/>
    <property type="match status" value="1"/>
</dbReference>
<dbReference type="SUPFAM" id="SSF56235">
    <property type="entry name" value="N-terminal nucleophile aminohydrolases (Ntn hydrolases)"/>
    <property type="match status" value="1"/>
</dbReference>
<dbReference type="PROSITE" id="PS51475">
    <property type="entry name" value="PROTEASOME_ALPHA_2"/>
    <property type="match status" value="1"/>
</dbReference>
<comment type="function">
    <text evidence="1">Component of the proteasome core, a large protease complex with broad specificity involved in protein degradation.</text>
</comment>
<comment type="activity regulation">
    <text evidence="1">The formation of the proteasomal ATPase ARC-20S proteasome complex, likely via the docking of the C-termini of ARC into the intersubunit pockets in the alpha-rings, may trigger opening of the gate for substrate entry. Interconversion between the open-gate and close-gate conformations leads to a dynamic regulation of the 20S proteasome proteolysis activity.</text>
</comment>
<comment type="pathway">
    <text evidence="1">Protein degradation; proteasomal Pup-dependent pathway.</text>
</comment>
<comment type="subunit">
    <text evidence="1">The 20S proteasome core is composed of 14 alpha and 14 beta subunits that assemble into four stacked heptameric rings, resulting in a barrel-shaped structure. The two inner rings, each composed of seven catalytic beta subunits, are sandwiched by two outer rings, each composed of seven alpha subunits. The catalytic chamber with the active sites is on the inside of the barrel. Has a gated structure, the ends of the cylinder being occluded by the N-termini of the alpha-subunits. Is capped by the proteasome-associated ATPase, ARC.</text>
</comment>
<comment type="subcellular location">
    <subcellularLocation>
        <location evidence="1">Cytoplasm</location>
    </subcellularLocation>
</comment>
<comment type="similarity">
    <text evidence="1">Belongs to the peptidase T1A family.</text>
</comment>
<proteinExistence type="inferred from homology"/>
<accession>C7R404</accession>
<sequence length="236" mass="26031">MSMPFYISPEQLMADRADYARKGIARGRAVIVATCTEGIVFATENHSQALHKISEIYDRIGFAAVGKYNEFEALRVAGIRYADLRGYSYDRSDVTARALAHAYAQTLGTAFTTESKPMEVEVVVAELGHDASRDEIYHLSYDGSVAQEHGCVVIGGDQDTIDAVFRSSWEPTMSLADTLTAITQALSQPPQKDAEHTMVTPAPTYEAALLDRSRPRRTFRRLTVTDFVPSTQGTRS</sequence>
<keyword id="KW-0963">Cytoplasm</keyword>
<keyword id="KW-0647">Proteasome</keyword>
<keyword id="KW-1185">Reference proteome</keyword>
<organism>
    <name type="scientific">Jonesia denitrificans (strain ATCC 14870 / DSM 20603 / BCRC 15368 / CIP 55.134 / JCM 11481 / NBRC 15587 / NCTC 10816 / Prevot 55134)</name>
    <name type="common">Listeria denitrificans</name>
    <dbReference type="NCBI Taxonomy" id="471856"/>
    <lineage>
        <taxon>Bacteria</taxon>
        <taxon>Bacillati</taxon>
        <taxon>Actinomycetota</taxon>
        <taxon>Actinomycetes</taxon>
        <taxon>Micrococcales</taxon>
        <taxon>Jonesiaceae</taxon>
        <taxon>Jonesia</taxon>
    </lineage>
</organism>
<name>PSA_JONDD</name>
<reference key="1">
    <citation type="journal article" date="2009" name="Stand. Genomic Sci.">
        <title>Complete genome sequence of Jonesia denitrificans type strain (Prevot 55134).</title>
        <authorList>
            <person name="Pukall R."/>
            <person name="Gehrich-Schroter G."/>
            <person name="Lapidus A."/>
            <person name="Nolan M."/>
            <person name="Glavina Del Rio T."/>
            <person name="Lucas S."/>
            <person name="Chen F."/>
            <person name="Tice H."/>
            <person name="Pitluck S."/>
            <person name="Cheng J.F."/>
            <person name="Copeland A."/>
            <person name="Saunders E."/>
            <person name="Brettin T."/>
            <person name="Detter J.C."/>
            <person name="Bruce D."/>
            <person name="Goodwin L."/>
            <person name="Pati A."/>
            <person name="Ivanova N."/>
            <person name="Mavromatis K."/>
            <person name="Ovchinnikova G."/>
            <person name="Chen A."/>
            <person name="Palaniappan K."/>
            <person name="Land M."/>
            <person name="Hauser L."/>
            <person name="Chang Y.J."/>
            <person name="Jeffries C.D."/>
            <person name="Chain P."/>
            <person name="Goker M."/>
            <person name="Bristow J."/>
            <person name="Eisen J.A."/>
            <person name="Markowitz V."/>
            <person name="Hugenholtz P."/>
            <person name="Kyrpides N.C."/>
            <person name="Klenk H.P."/>
            <person name="Han C."/>
        </authorList>
    </citation>
    <scope>NUCLEOTIDE SEQUENCE [LARGE SCALE GENOMIC DNA]</scope>
    <source>
        <strain>ATCC 14870 / DSM 20603 / BCRC 15368 / CIP 55.134 / JCM 11481 / NBRC 15587 / NCTC 10816 / Prevot 55134</strain>
    </source>
</reference>
<protein>
    <recommendedName>
        <fullName evidence="1">Proteasome subunit alpha</fullName>
    </recommendedName>
    <alternativeName>
        <fullName evidence="1">20S proteasome alpha subunit</fullName>
    </alternativeName>
    <alternativeName>
        <fullName evidence="1">Proteasome core protein PrcA</fullName>
    </alternativeName>
</protein>
<gene>
    <name evidence="1" type="primary">prcA</name>
    <name type="ordered locus">Jden_1205</name>
</gene>